<keyword id="KW-0997">Cell inner membrane</keyword>
<keyword id="KW-1003">Cell membrane</keyword>
<keyword id="KW-0407">Ion channel</keyword>
<keyword id="KW-0406">Ion transport</keyword>
<keyword id="KW-0472">Membrane</keyword>
<keyword id="KW-0812">Transmembrane</keyword>
<keyword id="KW-1133">Transmembrane helix</keyword>
<keyword id="KW-0813">Transport</keyword>
<sequence length="134" mass="14561">MSFIREFKEFVMRGNVIDLAVAVVIGAAFGKIVTALVDKIISPLIGVMVGGIDFSKLSLTLKAATVDTAGKEVPAVVIGYGDFLNTILQFIIIAFAIFIIVKMINKVTNKQPLPPETPSEDVLLLREIRDSLKK</sequence>
<reference key="1">
    <citation type="journal article" date="2010" name="J. Bacteriol.">
        <title>Whole genome sequences of two Xylella fastidiosa strains (M12 and M23) causing almond leaf scorch disease in California.</title>
        <authorList>
            <person name="Chen J."/>
            <person name="Xie G."/>
            <person name="Han S."/>
            <person name="Chertkov O."/>
            <person name="Sims D."/>
            <person name="Civerolo E.L."/>
        </authorList>
    </citation>
    <scope>NUCLEOTIDE SEQUENCE [LARGE SCALE GENOMIC DNA]</scope>
    <source>
        <strain>M12</strain>
    </source>
</reference>
<organism>
    <name type="scientific">Xylella fastidiosa (strain M12)</name>
    <dbReference type="NCBI Taxonomy" id="405440"/>
    <lineage>
        <taxon>Bacteria</taxon>
        <taxon>Pseudomonadati</taxon>
        <taxon>Pseudomonadota</taxon>
        <taxon>Gammaproteobacteria</taxon>
        <taxon>Lysobacterales</taxon>
        <taxon>Lysobacteraceae</taxon>
        <taxon>Xylella</taxon>
    </lineage>
</organism>
<comment type="function">
    <text evidence="1">Channel that opens in response to stretch forces in the membrane lipid bilayer. May participate in the regulation of osmotic pressure changes within the cell.</text>
</comment>
<comment type="subunit">
    <text evidence="1">Homopentamer.</text>
</comment>
<comment type="subcellular location">
    <subcellularLocation>
        <location evidence="1">Cell inner membrane</location>
        <topology evidence="1">Multi-pass membrane protein</topology>
    </subcellularLocation>
</comment>
<comment type="similarity">
    <text evidence="1">Belongs to the MscL family.</text>
</comment>
<dbReference type="EMBL" id="CP000941">
    <property type="protein sequence ID" value="ACA11081.1"/>
    <property type="molecule type" value="Genomic_DNA"/>
</dbReference>
<dbReference type="RefSeq" id="WP_004085069.1">
    <property type="nucleotide sequence ID" value="NC_010513.1"/>
</dbReference>
<dbReference type="SMR" id="B0U1E0"/>
<dbReference type="KEGG" id="xfm:Xfasm12_0033"/>
<dbReference type="HOGENOM" id="CLU_095787_0_0_6"/>
<dbReference type="GO" id="GO:0005886">
    <property type="term" value="C:plasma membrane"/>
    <property type="evidence" value="ECO:0007669"/>
    <property type="project" value="UniProtKB-SubCell"/>
</dbReference>
<dbReference type="GO" id="GO:0008381">
    <property type="term" value="F:mechanosensitive monoatomic ion channel activity"/>
    <property type="evidence" value="ECO:0007669"/>
    <property type="project" value="UniProtKB-UniRule"/>
</dbReference>
<dbReference type="FunFam" id="1.10.1200.120:FF:000001">
    <property type="entry name" value="Large-conductance mechanosensitive channel"/>
    <property type="match status" value="1"/>
</dbReference>
<dbReference type="Gene3D" id="1.10.1200.120">
    <property type="entry name" value="Large-conductance mechanosensitive channel, MscL, domain 1"/>
    <property type="match status" value="1"/>
</dbReference>
<dbReference type="HAMAP" id="MF_00115">
    <property type="entry name" value="MscL"/>
    <property type="match status" value="1"/>
</dbReference>
<dbReference type="InterPro" id="IPR019823">
    <property type="entry name" value="Mechanosensitive_channel_CS"/>
</dbReference>
<dbReference type="InterPro" id="IPR001185">
    <property type="entry name" value="MS_channel"/>
</dbReference>
<dbReference type="InterPro" id="IPR037673">
    <property type="entry name" value="MSC/AndL"/>
</dbReference>
<dbReference type="InterPro" id="IPR036019">
    <property type="entry name" value="MscL_channel"/>
</dbReference>
<dbReference type="NCBIfam" id="TIGR00220">
    <property type="entry name" value="mscL"/>
    <property type="match status" value="1"/>
</dbReference>
<dbReference type="NCBIfam" id="NF001843">
    <property type="entry name" value="PRK00567.1-4"/>
    <property type="match status" value="1"/>
</dbReference>
<dbReference type="PANTHER" id="PTHR30266:SF2">
    <property type="entry name" value="LARGE-CONDUCTANCE MECHANOSENSITIVE CHANNEL"/>
    <property type="match status" value="1"/>
</dbReference>
<dbReference type="PANTHER" id="PTHR30266">
    <property type="entry name" value="MECHANOSENSITIVE CHANNEL MSCL"/>
    <property type="match status" value="1"/>
</dbReference>
<dbReference type="Pfam" id="PF01741">
    <property type="entry name" value="MscL"/>
    <property type="match status" value="1"/>
</dbReference>
<dbReference type="PRINTS" id="PR01264">
    <property type="entry name" value="MECHCHANNEL"/>
</dbReference>
<dbReference type="SUPFAM" id="SSF81330">
    <property type="entry name" value="Gated mechanosensitive channel"/>
    <property type="match status" value="1"/>
</dbReference>
<dbReference type="PROSITE" id="PS01327">
    <property type="entry name" value="MSCL"/>
    <property type="match status" value="1"/>
</dbReference>
<proteinExistence type="inferred from homology"/>
<accession>B0U1E0</accession>
<evidence type="ECO:0000255" key="1">
    <source>
        <dbReference type="HAMAP-Rule" id="MF_00115"/>
    </source>
</evidence>
<gene>
    <name evidence="1" type="primary">mscL</name>
    <name type="ordered locus">Xfasm12_0033</name>
</gene>
<feature type="chain" id="PRO_1000094933" description="Large-conductance mechanosensitive channel">
    <location>
        <begin position="1"/>
        <end position="134"/>
    </location>
</feature>
<feature type="transmembrane region" description="Helical" evidence="1">
    <location>
        <begin position="16"/>
        <end position="36"/>
    </location>
</feature>
<feature type="transmembrane region" description="Helical" evidence="1">
    <location>
        <begin position="81"/>
        <end position="101"/>
    </location>
</feature>
<name>MSCL_XYLFM</name>
<protein>
    <recommendedName>
        <fullName evidence="1">Large-conductance mechanosensitive channel</fullName>
    </recommendedName>
</protein>